<gene>
    <name type="primary">MT-ND4L</name>
    <name type="synonym">MTND4L</name>
    <name type="synonym">NADH4L</name>
    <name type="synonym">ND4L</name>
</gene>
<sequence>MTMVYANIFLAFTTSLMGLLMYRSHLMSSLLCLEGMMLSLFVMMTVTILNNHFTLASMAPIILLVFAACEAALGLSLLVMVSNTYGTDYVQNLNLLQC</sequence>
<comment type="function">
    <text evidence="1">Core subunit of the mitochondrial membrane respiratory chain NADH dehydrogenase (Complex I) which catalyzes electron transfer from NADH through the respiratory chain, using ubiquinone as an electron acceptor. Part of the enzyme membrane arm which is embedded in the lipid bilayer and involved in proton translocation.</text>
</comment>
<comment type="catalytic activity">
    <reaction evidence="1">
        <text>a ubiquinone + NADH + 5 H(+)(in) = a ubiquinol + NAD(+) + 4 H(+)(out)</text>
        <dbReference type="Rhea" id="RHEA:29091"/>
        <dbReference type="Rhea" id="RHEA-COMP:9565"/>
        <dbReference type="Rhea" id="RHEA-COMP:9566"/>
        <dbReference type="ChEBI" id="CHEBI:15378"/>
        <dbReference type="ChEBI" id="CHEBI:16389"/>
        <dbReference type="ChEBI" id="CHEBI:17976"/>
        <dbReference type="ChEBI" id="CHEBI:57540"/>
        <dbReference type="ChEBI" id="CHEBI:57945"/>
        <dbReference type="EC" id="7.1.1.2"/>
    </reaction>
    <physiologicalReaction direction="left-to-right" evidence="1">
        <dbReference type="Rhea" id="RHEA:29092"/>
    </physiologicalReaction>
</comment>
<comment type="subunit">
    <text evidence="2">Core subunit of respiratory chain NADH dehydrogenase (Complex I) which is composed of 45 different subunits.</text>
</comment>
<comment type="subcellular location">
    <subcellularLocation>
        <location evidence="2">Mitochondrion inner membrane</location>
        <topology evidence="3">Multi-pass membrane protein</topology>
    </subcellularLocation>
</comment>
<comment type="similarity">
    <text evidence="4">Belongs to the complex I subunit 4L family.</text>
</comment>
<organism>
    <name type="scientific">Neomonachus schauinslandi</name>
    <name type="common">Hawaiian monk seal</name>
    <name type="synonym">Monachus schauinslandi</name>
    <dbReference type="NCBI Taxonomy" id="29088"/>
    <lineage>
        <taxon>Eukaryota</taxon>
        <taxon>Metazoa</taxon>
        <taxon>Chordata</taxon>
        <taxon>Craniata</taxon>
        <taxon>Vertebrata</taxon>
        <taxon>Euteleostomi</taxon>
        <taxon>Mammalia</taxon>
        <taxon>Eutheria</taxon>
        <taxon>Laurasiatheria</taxon>
        <taxon>Carnivora</taxon>
        <taxon>Caniformia</taxon>
        <taxon>Pinnipedia</taxon>
        <taxon>Phocidae</taxon>
        <taxon>Monachinae</taxon>
        <taxon>Monachini</taxon>
        <taxon>Neomonachus</taxon>
    </lineage>
</organism>
<protein>
    <recommendedName>
        <fullName>NADH-ubiquinone oxidoreductase chain 4L</fullName>
        <ecNumber>7.1.1.2</ecNumber>
    </recommendedName>
    <alternativeName>
        <fullName>NADH dehydrogenase subunit 4L</fullName>
    </alternativeName>
</protein>
<evidence type="ECO:0000250" key="1">
    <source>
        <dbReference type="UniProtKB" id="P03901"/>
    </source>
</evidence>
<evidence type="ECO:0000250" key="2">
    <source>
        <dbReference type="UniProtKB" id="P03902"/>
    </source>
</evidence>
<evidence type="ECO:0000255" key="3"/>
<evidence type="ECO:0000305" key="4"/>
<proteinExistence type="inferred from homology"/>
<reference key="1">
    <citation type="journal article" date="2004" name="Mol. Phylogenet. Evol.">
        <title>A phylogeny of the extant Phocidae inferred from complete mitochondrial DNA coding regions.</title>
        <authorList>
            <person name="Davis C.S."/>
            <person name="Delisle I."/>
            <person name="Stirling I."/>
            <person name="Siniff D.B."/>
            <person name="Strobeck C."/>
        </authorList>
    </citation>
    <scope>NUCLEOTIDE SEQUENCE [GENOMIC DNA]</scope>
</reference>
<reference key="2">
    <citation type="journal article" date="2006" name="Mol. Phylogenet. Evol.">
        <title>Pinniped phylogeny and a new hypothesis for their origin and dispersal.</title>
        <authorList>
            <person name="Arnason U."/>
            <person name="Gullberg A."/>
            <person name="Janke A."/>
            <person name="Kullberg M."/>
            <person name="Lehman N."/>
            <person name="Petrov E.A."/>
            <person name="Vainola R."/>
        </authorList>
    </citation>
    <scope>NUCLEOTIDE SEQUENCE [GENOMIC DNA]</scope>
</reference>
<name>NU4LM_NEOSC</name>
<feature type="chain" id="PRO_0000275069" description="NADH-ubiquinone oxidoreductase chain 4L">
    <location>
        <begin position="1"/>
        <end position="98"/>
    </location>
</feature>
<feature type="transmembrane region" description="Helical" evidence="3">
    <location>
        <begin position="1"/>
        <end position="21"/>
    </location>
</feature>
<feature type="transmembrane region" description="Helical" evidence="3">
    <location>
        <begin position="29"/>
        <end position="49"/>
    </location>
</feature>
<feature type="transmembrane region" description="Helical" evidence="3">
    <location>
        <begin position="61"/>
        <end position="81"/>
    </location>
</feature>
<accession>Q679B1</accession>
<geneLocation type="mitochondrion"/>
<keyword id="KW-0249">Electron transport</keyword>
<keyword id="KW-0472">Membrane</keyword>
<keyword id="KW-0496">Mitochondrion</keyword>
<keyword id="KW-0999">Mitochondrion inner membrane</keyword>
<keyword id="KW-0520">NAD</keyword>
<keyword id="KW-1185">Reference proteome</keyword>
<keyword id="KW-0679">Respiratory chain</keyword>
<keyword id="KW-1278">Translocase</keyword>
<keyword id="KW-0812">Transmembrane</keyword>
<keyword id="KW-1133">Transmembrane helix</keyword>
<keyword id="KW-0813">Transport</keyword>
<keyword id="KW-0830">Ubiquinone</keyword>
<dbReference type="EC" id="7.1.1.2"/>
<dbReference type="EMBL" id="AY377233">
    <property type="protein sequence ID" value="AAQ93772.1"/>
    <property type="molecule type" value="Genomic_DNA"/>
</dbReference>
<dbReference type="EMBL" id="AM181022">
    <property type="protein sequence ID" value="CAJ56957.1"/>
    <property type="molecule type" value="Genomic_DNA"/>
</dbReference>
<dbReference type="RefSeq" id="YP_778768.1">
    <property type="nucleotide sequence ID" value="NC_008421.1"/>
</dbReference>
<dbReference type="SMR" id="Q679B1"/>
<dbReference type="GeneID" id="4356027"/>
<dbReference type="CTD" id="4539"/>
<dbReference type="Proteomes" id="UP000248481">
    <property type="component" value="Unplaced"/>
</dbReference>
<dbReference type="GO" id="GO:0005743">
    <property type="term" value="C:mitochondrial inner membrane"/>
    <property type="evidence" value="ECO:0000250"/>
    <property type="project" value="UniProtKB"/>
</dbReference>
<dbReference type="GO" id="GO:0045271">
    <property type="term" value="C:respiratory chain complex I"/>
    <property type="evidence" value="ECO:0000250"/>
    <property type="project" value="UniProtKB"/>
</dbReference>
<dbReference type="GO" id="GO:0008137">
    <property type="term" value="F:NADH dehydrogenase (ubiquinone) activity"/>
    <property type="evidence" value="ECO:0000250"/>
    <property type="project" value="UniProtKB"/>
</dbReference>
<dbReference type="GO" id="GO:0042773">
    <property type="term" value="P:ATP synthesis coupled electron transport"/>
    <property type="evidence" value="ECO:0007669"/>
    <property type="project" value="InterPro"/>
</dbReference>
<dbReference type="FunFam" id="1.10.287.3510:FF:000002">
    <property type="entry name" value="NADH-ubiquinone oxidoreductase chain 4L"/>
    <property type="match status" value="1"/>
</dbReference>
<dbReference type="Gene3D" id="1.10.287.3510">
    <property type="match status" value="1"/>
</dbReference>
<dbReference type="InterPro" id="IPR001133">
    <property type="entry name" value="NADH_UbQ_OxRdtase_chain4L/K"/>
</dbReference>
<dbReference type="InterPro" id="IPR039428">
    <property type="entry name" value="NUOK/Mnh_C1-like"/>
</dbReference>
<dbReference type="PANTHER" id="PTHR11434:SF0">
    <property type="entry name" value="NADH-UBIQUINONE OXIDOREDUCTASE CHAIN 4L"/>
    <property type="match status" value="1"/>
</dbReference>
<dbReference type="PANTHER" id="PTHR11434">
    <property type="entry name" value="NADH-UBIQUINONE OXIDOREDUCTASE SUBUNIT ND4L"/>
    <property type="match status" value="1"/>
</dbReference>
<dbReference type="Pfam" id="PF00420">
    <property type="entry name" value="Oxidored_q2"/>
    <property type="match status" value="1"/>
</dbReference>